<gene>
    <name type="primary">CYP77A1</name>
    <name type="synonym">CYPEG6</name>
</gene>
<keyword id="KW-0349">Heme</keyword>
<keyword id="KW-0408">Iron</keyword>
<keyword id="KW-0479">Metal-binding</keyword>
<keyword id="KW-0503">Monooxygenase</keyword>
<keyword id="KW-0560">Oxidoreductase</keyword>
<accession>P37123</accession>
<evidence type="ECO:0000250" key="1"/>
<evidence type="ECO:0000305" key="2"/>
<dbReference type="EC" id="1.14.-.-"/>
<dbReference type="EMBL" id="X71656">
    <property type="protein sequence ID" value="CAA50647.1"/>
    <property type="molecule type" value="mRNA"/>
</dbReference>
<dbReference type="PIR" id="S41599">
    <property type="entry name" value="S41599"/>
</dbReference>
<dbReference type="SMR" id="P37123"/>
<dbReference type="GO" id="GO:0020037">
    <property type="term" value="F:heme binding"/>
    <property type="evidence" value="ECO:0007669"/>
    <property type="project" value="InterPro"/>
</dbReference>
<dbReference type="GO" id="GO:0005506">
    <property type="term" value="F:iron ion binding"/>
    <property type="evidence" value="ECO:0007669"/>
    <property type="project" value="InterPro"/>
</dbReference>
<dbReference type="GO" id="GO:0004497">
    <property type="term" value="F:monooxygenase activity"/>
    <property type="evidence" value="ECO:0007669"/>
    <property type="project" value="UniProtKB-KW"/>
</dbReference>
<dbReference type="GO" id="GO:0016705">
    <property type="term" value="F:oxidoreductase activity, acting on paired donors, with incorporation or reduction of molecular oxygen"/>
    <property type="evidence" value="ECO:0007669"/>
    <property type="project" value="InterPro"/>
</dbReference>
<dbReference type="CDD" id="cd11075">
    <property type="entry name" value="CYP77_89"/>
    <property type="match status" value="1"/>
</dbReference>
<dbReference type="FunFam" id="1.10.630.10:FF:000012">
    <property type="entry name" value="Cytochrome P450 family protein"/>
    <property type="match status" value="1"/>
</dbReference>
<dbReference type="Gene3D" id="1.10.630.10">
    <property type="entry name" value="Cytochrome P450"/>
    <property type="match status" value="1"/>
</dbReference>
<dbReference type="InterPro" id="IPR001128">
    <property type="entry name" value="Cyt_P450"/>
</dbReference>
<dbReference type="InterPro" id="IPR017972">
    <property type="entry name" value="Cyt_P450_CS"/>
</dbReference>
<dbReference type="InterPro" id="IPR002401">
    <property type="entry name" value="Cyt_P450_E_grp-I"/>
</dbReference>
<dbReference type="InterPro" id="IPR036396">
    <property type="entry name" value="Cyt_P450_sf"/>
</dbReference>
<dbReference type="PANTHER" id="PTHR47944:SF19">
    <property type="entry name" value="CYTOCHROME P450 77A4"/>
    <property type="match status" value="1"/>
</dbReference>
<dbReference type="PANTHER" id="PTHR47944">
    <property type="entry name" value="CYTOCHROME P450 98A9"/>
    <property type="match status" value="1"/>
</dbReference>
<dbReference type="Pfam" id="PF00067">
    <property type="entry name" value="p450"/>
    <property type="match status" value="1"/>
</dbReference>
<dbReference type="PRINTS" id="PR00463">
    <property type="entry name" value="EP450I"/>
</dbReference>
<dbReference type="PRINTS" id="PR00385">
    <property type="entry name" value="P450"/>
</dbReference>
<dbReference type="SUPFAM" id="SSF48264">
    <property type="entry name" value="Cytochrome P450"/>
    <property type="match status" value="1"/>
</dbReference>
<dbReference type="PROSITE" id="PS00086">
    <property type="entry name" value="CYTOCHROME_P450"/>
    <property type="match status" value="1"/>
</dbReference>
<organism>
    <name type="scientific">Solanum melongena</name>
    <name type="common">Eggplant</name>
    <name type="synonym">Aubergine</name>
    <dbReference type="NCBI Taxonomy" id="223891"/>
    <lineage>
        <taxon>Eukaryota</taxon>
        <taxon>Viridiplantae</taxon>
        <taxon>Streptophyta</taxon>
        <taxon>Embryophyta</taxon>
        <taxon>Tracheophyta</taxon>
        <taxon>Spermatophyta</taxon>
        <taxon>Magnoliopsida</taxon>
        <taxon>eudicotyledons</taxon>
        <taxon>Gunneridae</taxon>
        <taxon>Pentapetalae</taxon>
        <taxon>asterids</taxon>
        <taxon>lamiids</taxon>
        <taxon>Solanales</taxon>
        <taxon>Solanaceae</taxon>
        <taxon>Solanoideae</taxon>
        <taxon>Solaneae</taxon>
        <taxon>Solanum</taxon>
    </lineage>
</organism>
<reference key="1">
    <citation type="journal article" date="1994" name="FEBS Lett.">
        <title>Cloning of eggplant hypocotyl cDNAs encoding cytochromes P450 belonging to a novel family (CYP77).</title>
        <authorList>
            <person name="Toguri T."/>
            <person name="Tokugawa K."/>
        </authorList>
    </citation>
    <scope>NUCLEOTIDE SEQUENCE [MRNA]</scope>
    <source>
        <strain>cv. Sinsadoharanasu</strain>
        <tissue>Hypocotyl</tissue>
    </source>
</reference>
<protein>
    <recommendedName>
        <fullName>Cytochrome P450 77A1</fullName>
        <ecNumber>1.14.-.-</ecNumber>
    </recommendedName>
    <alternativeName>
        <fullName>CYPLXXVIIA1</fullName>
    </alternativeName>
    <alternativeName>
        <fullName>Cytochrome P-450EG6</fullName>
    </alternativeName>
</protein>
<sequence length="499" mass="57077">IFTAFSLLFSLFIFLLTRKPKSKTPNLPPGPPGWPIVGNLFQVAGSGKQFFEYIRDLKPKYGSIFTLKMGSRTMIIVASAELAHEALIQKGQIFASRPRENPTRTIFSCNKFSVNAAVYGPVWRSLRRNMVQNMLSPSRLKEFREFREIAMDKLIERIRVDAKENNDVVWALKNARFAVFYILVAMCFGVEMDNEEMIERVDQMMKDVLIVLDPRIDDFLPILRLFVGYKQRKRVNEVRKRQIETLVPLIEKRRSVVQNPGSDKTAASFSYLDTLFDVKVEGRKSGPTNAELVTLCSEFLNGGTDTTATALEWGIGRLMENPTIQNQLYQEIKTIVGDKKVDENDIEKMPYLNAVVKELLRKHPPTYFTLTHSVTEPVKLAGYDIPMDTNVEFFVHGISHDPNVWSDPEKFDPDRFLSGREDADITGVKEVKMMPFGVGRRICPGLGMATVHVNLMLARMVQEFEWFAYPGNNKVDFSEKLEFTVVMKNPLRAKVKLRI</sequence>
<name>C77A1_SOLME</name>
<feature type="chain" id="PRO_0000052145" description="Cytochrome P450 77A1">
    <location>
        <begin position="1" status="less than"/>
        <end position="499"/>
    </location>
</feature>
<feature type="binding site" description="axial binding residue" evidence="1">
    <location>
        <position position="443"/>
    </location>
    <ligand>
        <name>heme</name>
        <dbReference type="ChEBI" id="CHEBI:30413"/>
    </ligand>
    <ligandPart>
        <name>Fe</name>
        <dbReference type="ChEBI" id="CHEBI:18248"/>
    </ligandPart>
</feature>
<feature type="non-terminal residue">
    <location>
        <position position="1"/>
    </location>
</feature>
<comment type="cofactor">
    <cofactor evidence="1">
        <name>heme</name>
        <dbReference type="ChEBI" id="CHEBI:30413"/>
    </cofactor>
</comment>
<comment type="similarity">
    <text evidence="2">Belongs to the cytochrome P450 family.</text>
</comment>
<proteinExistence type="evidence at transcript level"/>